<gene>
    <name evidence="1" type="primary">aroA</name>
    <name type="ordered locus">RALTA_A0776</name>
</gene>
<protein>
    <recommendedName>
        <fullName evidence="1">3-phosphoshikimate 1-carboxyvinyltransferase</fullName>
        <ecNumber evidence="1">2.5.1.19</ecNumber>
    </recommendedName>
    <alternativeName>
        <fullName evidence="1">5-enolpyruvylshikimate-3-phosphate synthase</fullName>
        <shortName evidence="1">EPSP synthase</shortName>
        <shortName evidence="1">EPSPS</shortName>
    </alternativeName>
</protein>
<feature type="chain" id="PRO_1000099696" description="3-phosphoshikimate 1-carboxyvinyltransferase">
    <location>
        <begin position="1"/>
        <end position="434"/>
    </location>
</feature>
<feature type="active site" description="Proton acceptor" evidence="1">
    <location>
        <position position="320"/>
    </location>
</feature>
<feature type="binding site" evidence="1">
    <location>
        <position position="22"/>
    </location>
    <ligand>
        <name>3-phosphoshikimate</name>
        <dbReference type="ChEBI" id="CHEBI:145989"/>
    </ligand>
</feature>
<feature type="binding site" evidence="1">
    <location>
        <position position="22"/>
    </location>
    <ligand>
        <name>phosphoenolpyruvate</name>
        <dbReference type="ChEBI" id="CHEBI:58702"/>
    </ligand>
</feature>
<feature type="binding site" evidence="1">
    <location>
        <position position="23"/>
    </location>
    <ligand>
        <name>3-phosphoshikimate</name>
        <dbReference type="ChEBI" id="CHEBI:145989"/>
    </ligand>
</feature>
<feature type="binding site" evidence="1">
    <location>
        <position position="27"/>
    </location>
    <ligand>
        <name>3-phosphoshikimate</name>
        <dbReference type="ChEBI" id="CHEBI:145989"/>
    </ligand>
</feature>
<feature type="binding site" evidence="1">
    <location>
        <position position="93"/>
    </location>
    <ligand>
        <name>phosphoenolpyruvate</name>
        <dbReference type="ChEBI" id="CHEBI:58702"/>
    </ligand>
</feature>
<feature type="binding site" evidence="1">
    <location>
        <position position="121"/>
    </location>
    <ligand>
        <name>phosphoenolpyruvate</name>
        <dbReference type="ChEBI" id="CHEBI:58702"/>
    </ligand>
</feature>
<feature type="binding site" evidence="1">
    <location>
        <position position="168"/>
    </location>
    <ligand>
        <name>3-phosphoshikimate</name>
        <dbReference type="ChEBI" id="CHEBI:145989"/>
    </ligand>
</feature>
<feature type="binding site" evidence="1">
    <location>
        <position position="169"/>
    </location>
    <ligand>
        <name>3-phosphoshikimate</name>
        <dbReference type="ChEBI" id="CHEBI:145989"/>
    </ligand>
</feature>
<feature type="binding site" evidence="1">
    <location>
        <position position="170"/>
    </location>
    <ligand>
        <name>3-phosphoshikimate</name>
        <dbReference type="ChEBI" id="CHEBI:145989"/>
    </ligand>
</feature>
<feature type="binding site" evidence="1">
    <location>
        <position position="170"/>
    </location>
    <ligand>
        <name>phosphoenolpyruvate</name>
        <dbReference type="ChEBI" id="CHEBI:58702"/>
    </ligand>
</feature>
<feature type="binding site" evidence="1">
    <location>
        <position position="199"/>
    </location>
    <ligand>
        <name>3-phosphoshikimate</name>
        <dbReference type="ChEBI" id="CHEBI:145989"/>
    </ligand>
</feature>
<feature type="binding site" evidence="1">
    <location>
        <position position="320"/>
    </location>
    <ligand>
        <name>3-phosphoshikimate</name>
        <dbReference type="ChEBI" id="CHEBI:145989"/>
    </ligand>
</feature>
<feature type="binding site" evidence="1">
    <location>
        <position position="347"/>
    </location>
    <ligand>
        <name>3-phosphoshikimate</name>
        <dbReference type="ChEBI" id="CHEBI:145989"/>
    </ligand>
</feature>
<feature type="binding site" evidence="1">
    <location>
        <position position="351"/>
    </location>
    <ligand>
        <name>phosphoenolpyruvate</name>
        <dbReference type="ChEBI" id="CHEBI:58702"/>
    </ligand>
</feature>
<feature type="binding site" evidence="1">
    <location>
        <position position="395"/>
    </location>
    <ligand>
        <name>phosphoenolpyruvate</name>
        <dbReference type="ChEBI" id="CHEBI:58702"/>
    </ligand>
</feature>
<feature type="binding site" evidence="1">
    <location>
        <position position="420"/>
    </location>
    <ligand>
        <name>phosphoenolpyruvate</name>
        <dbReference type="ChEBI" id="CHEBI:58702"/>
    </ligand>
</feature>
<organism>
    <name type="scientific">Cupriavidus taiwanensis (strain DSM 17343 / BCRC 17206 / CCUG 44338 / CIP 107171 / LMG 19424 / R1)</name>
    <name type="common">Ralstonia taiwanensis (strain LMG 19424)</name>
    <dbReference type="NCBI Taxonomy" id="977880"/>
    <lineage>
        <taxon>Bacteria</taxon>
        <taxon>Pseudomonadati</taxon>
        <taxon>Pseudomonadota</taxon>
        <taxon>Betaproteobacteria</taxon>
        <taxon>Burkholderiales</taxon>
        <taxon>Burkholderiaceae</taxon>
        <taxon>Cupriavidus</taxon>
    </lineage>
</organism>
<keyword id="KW-0028">Amino-acid biosynthesis</keyword>
<keyword id="KW-0057">Aromatic amino acid biosynthesis</keyword>
<keyword id="KW-0963">Cytoplasm</keyword>
<keyword id="KW-0808">Transferase</keyword>
<comment type="function">
    <text evidence="1">Catalyzes the transfer of the enolpyruvyl moiety of phosphoenolpyruvate (PEP) to the 5-hydroxyl of shikimate-3-phosphate (S3P) to produce enolpyruvyl shikimate-3-phosphate and inorganic phosphate.</text>
</comment>
<comment type="catalytic activity">
    <reaction evidence="1">
        <text>3-phosphoshikimate + phosphoenolpyruvate = 5-O-(1-carboxyvinyl)-3-phosphoshikimate + phosphate</text>
        <dbReference type="Rhea" id="RHEA:21256"/>
        <dbReference type="ChEBI" id="CHEBI:43474"/>
        <dbReference type="ChEBI" id="CHEBI:57701"/>
        <dbReference type="ChEBI" id="CHEBI:58702"/>
        <dbReference type="ChEBI" id="CHEBI:145989"/>
        <dbReference type="EC" id="2.5.1.19"/>
    </reaction>
    <physiologicalReaction direction="left-to-right" evidence="1">
        <dbReference type="Rhea" id="RHEA:21257"/>
    </physiologicalReaction>
</comment>
<comment type="pathway">
    <text evidence="1">Metabolic intermediate biosynthesis; chorismate biosynthesis; chorismate from D-erythrose 4-phosphate and phosphoenolpyruvate: step 6/7.</text>
</comment>
<comment type="subunit">
    <text evidence="1">Monomer.</text>
</comment>
<comment type="subcellular location">
    <subcellularLocation>
        <location evidence="1">Cytoplasm</location>
    </subcellularLocation>
</comment>
<comment type="similarity">
    <text evidence="1">Belongs to the EPSP synthase family.</text>
</comment>
<evidence type="ECO:0000255" key="1">
    <source>
        <dbReference type="HAMAP-Rule" id="MF_00210"/>
    </source>
</evidence>
<accession>B3R368</accession>
<reference key="1">
    <citation type="journal article" date="2008" name="Genome Res.">
        <title>Genome sequence of the beta-rhizobium Cupriavidus taiwanensis and comparative genomics of rhizobia.</title>
        <authorList>
            <person name="Amadou C."/>
            <person name="Pascal G."/>
            <person name="Mangenot S."/>
            <person name="Glew M."/>
            <person name="Bontemps C."/>
            <person name="Capela D."/>
            <person name="Carrere S."/>
            <person name="Cruveiller S."/>
            <person name="Dossat C."/>
            <person name="Lajus A."/>
            <person name="Marchetti M."/>
            <person name="Poinsot V."/>
            <person name="Rouy Z."/>
            <person name="Servin B."/>
            <person name="Saad M."/>
            <person name="Schenowitz C."/>
            <person name="Barbe V."/>
            <person name="Batut J."/>
            <person name="Medigue C."/>
            <person name="Masson-Boivin C."/>
        </authorList>
    </citation>
    <scope>NUCLEOTIDE SEQUENCE [LARGE SCALE GENOMIC DNA]</scope>
    <source>
        <strain>DSM 17343 / BCRC 17206 / CCUG 44338 / CIP 107171 / LMG 19424 / R1</strain>
    </source>
</reference>
<dbReference type="EC" id="2.5.1.19" evidence="1"/>
<dbReference type="EMBL" id="CU633749">
    <property type="protein sequence ID" value="CAQ68748.1"/>
    <property type="molecule type" value="Genomic_DNA"/>
</dbReference>
<dbReference type="RefSeq" id="WP_012352085.1">
    <property type="nucleotide sequence ID" value="NC_010528.1"/>
</dbReference>
<dbReference type="SMR" id="B3R368"/>
<dbReference type="GeneID" id="29761534"/>
<dbReference type="KEGG" id="cti:RALTA_A0776"/>
<dbReference type="eggNOG" id="COG0128">
    <property type="taxonomic scope" value="Bacteria"/>
</dbReference>
<dbReference type="HOGENOM" id="CLU_024321_0_0_4"/>
<dbReference type="BioCyc" id="CTAI977880:RALTA_RS03745-MONOMER"/>
<dbReference type="UniPathway" id="UPA00053">
    <property type="reaction ID" value="UER00089"/>
</dbReference>
<dbReference type="Proteomes" id="UP000001692">
    <property type="component" value="Chromosome 1"/>
</dbReference>
<dbReference type="GO" id="GO:0005737">
    <property type="term" value="C:cytoplasm"/>
    <property type="evidence" value="ECO:0007669"/>
    <property type="project" value="UniProtKB-SubCell"/>
</dbReference>
<dbReference type="GO" id="GO:0003866">
    <property type="term" value="F:3-phosphoshikimate 1-carboxyvinyltransferase activity"/>
    <property type="evidence" value="ECO:0007669"/>
    <property type="project" value="UniProtKB-UniRule"/>
</dbReference>
<dbReference type="GO" id="GO:0008652">
    <property type="term" value="P:amino acid biosynthetic process"/>
    <property type="evidence" value="ECO:0007669"/>
    <property type="project" value="UniProtKB-KW"/>
</dbReference>
<dbReference type="GO" id="GO:0009073">
    <property type="term" value="P:aromatic amino acid family biosynthetic process"/>
    <property type="evidence" value="ECO:0007669"/>
    <property type="project" value="UniProtKB-KW"/>
</dbReference>
<dbReference type="GO" id="GO:0009423">
    <property type="term" value="P:chorismate biosynthetic process"/>
    <property type="evidence" value="ECO:0007669"/>
    <property type="project" value="UniProtKB-UniRule"/>
</dbReference>
<dbReference type="CDD" id="cd01556">
    <property type="entry name" value="EPSP_synthase"/>
    <property type="match status" value="1"/>
</dbReference>
<dbReference type="FunFam" id="3.65.10.10:FF:000003">
    <property type="entry name" value="3-phosphoshikimate 1-carboxyvinyltransferase"/>
    <property type="match status" value="1"/>
</dbReference>
<dbReference type="FunFam" id="3.65.10.10:FF:000004">
    <property type="entry name" value="3-phosphoshikimate 1-carboxyvinyltransferase"/>
    <property type="match status" value="1"/>
</dbReference>
<dbReference type="Gene3D" id="3.65.10.10">
    <property type="entry name" value="Enolpyruvate transferase domain"/>
    <property type="match status" value="2"/>
</dbReference>
<dbReference type="HAMAP" id="MF_00210">
    <property type="entry name" value="EPSP_synth"/>
    <property type="match status" value="1"/>
</dbReference>
<dbReference type="InterPro" id="IPR001986">
    <property type="entry name" value="Enolpyruvate_Tfrase_dom"/>
</dbReference>
<dbReference type="InterPro" id="IPR036968">
    <property type="entry name" value="Enolpyruvate_Tfrase_sf"/>
</dbReference>
<dbReference type="InterPro" id="IPR006264">
    <property type="entry name" value="EPSP_synthase"/>
</dbReference>
<dbReference type="InterPro" id="IPR023193">
    <property type="entry name" value="EPSP_synthase_CS"/>
</dbReference>
<dbReference type="InterPro" id="IPR013792">
    <property type="entry name" value="RNA3'P_cycl/enolpyr_Trfase_a/b"/>
</dbReference>
<dbReference type="NCBIfam" id="TIGR01356">
    <property type="entry name" value="aroA"/>
    <property type="match status" value="1"/>
</dbReference>
<dbReference type="PANTHER" id="PTHR21090">
    <property type="entry name" value="AROM/DEHYDROQUINATE SYNTHASE"/>
    <property type="match status" value="1"/>
</dbReference>
<dbReference type="PANTHER" id="PTHR21090:SF5">
    <property type="entry name" value="PENTAFUNCTIONAL AROM POLYPEPTIDE"/>
    <property type="match status" value="1"/>
</dbReference>
<dbReference type="Pfam" id="PF00275">
    <property type="entry name" value="EPSP_synthase"/>
    <property type="match status" value="1"/>
</dbReference>
<dbReference type="PIRSF" id="PIRSF000505">
    <property type="entry name" value="EPSPS"/>
    <property type="match status" value="1"/>
</dbReference>
<dbReference type="SUPFAM" id="SSF55205">
    <property type="entry name" value="EPT/RTPC-like"/>
    <property type="match status" value="1"/>
</dbReference>
<dbReference type="PROSITE" id="PS00104">
    <property type="entry name" value="EPSP_SYNTHASE_1"/>
    <property type="match status" value="1"/>
</dbReference>
<dbReference type="PROSITE" id="PS00885">
    <property type="entry name" value="EPSP_SYNTHASE_2"/>
    <property type="match status" value="1"/>
</dbReference>
<name>AROA_CUPTR</name>
<sequence length="434" mass="46425">MEHLTLGPLTRATGTVRLPGSKSISNRVLLLAALANGETRVRDLLDSDDTRVMLQALRTLGVAWRQDGPDYIVTGAGGNFPVKSAELFMGNAGTAIRPLTAALALQGGSYKLSGVPRMHERPIGDLVDGLRQVGAVIDYLGNEGFPPLHIQPASLRIDAPIRVRGDVSSQFLTALLMSLPLAQSASGRIEIEVVGELISKPYIEITLNLLARFGIEVERQGWERFILPAGTAYRSPGEIFVEGDASSASYFLAAGAIGGGPVRVEGVGMASIQGDVRFADALNRMGANVMAGDNWIEVRGTERDDGRLHGIELDCNHIPDAAMTLAVAALFAEGTTTLTNIASWRVKETDRIAAMATELRKLGAVVEEGADYLRVTPPQPWQTPADGIGTYDDHRMAMCFSLAAFGPLPVRINDPGCVAKTFPDYFSVFAGVTR</sequence>
<proteinExistence type="inferred from homology"/>